<name>HSP1_GLABE</name>
<sequence length="46" mass="6368">MARYRCCRSRSRCRRRRRRSYRRRRRCCRRRRRRVCCRRYVRCRRR</sequence>
<keyword id="KW-0158">Chromosome</keyword>
<keyword id="KW-0217">Developmental protein</keyword>
<keyword id="KW-0221">Differentiation</keyword>
<keyword id="KW-0226">DNA condensation</keyword>
<keyword id="KW-0238">DNA-binding</keyword>
<keyword id="KW-0544">Nucleosome core</keyword>
<keyword id="KW-0539">Nucleus</keyword>
<keyword id="KW-0744">Spermatogenesis</keyword>
<feature type="chain" id="PRO_0000191455" description="Sperm protamine P1">
    <location>
        <begin position="1"/>
        <end position="46"/>
    </location>
</feature>
<accession>Q8WNY9</accession>
<proteinExistence type="evidence at transcript level"/>
<comment type="function">
    <text evidence="1">Protamines substitute for histones in the chromatin of sperm during the haploid phase of spermatogenesis. They compact sperm DNA into a highly condensed, stable and inactive complex (By similarity).</text>
</comment>
<comment type="subcellular location">
    <subcellularLocation>
        <location evidence="1">Nucleus</location>
    </subcellularLocation>
    <subcellularLocation>
        <location evidence="1">Chromosome</location>
    </subcellularLocation>
</comment>
<comment type="tissue specificity">
    <text>Testis.</text>
</comment>
<comment type="similarity">
    <text evidence="2">Belongs to the protamine P1 family.</text>
</comment>
<dbReference type="EMBL" id="AF435944">
    <property type="protein sequence ID" value="AAL35578.1"/>
    <property type="molecule type" value="Genomic_DNA"/>
</dbReference>
<dbReference type="GO" id="GO:0000786">
    <property type="term" value="C:nucleosome"/>
    <property type="evidence" value="ECO:0007669"/>
    <property type="project" value="UniProtKB-KW"/>
</dbReference>
<dbReference type="GO" id="GO:0005634">
    <property type="term" value="C:nucleus"/>
    <property type="evidence" value="ECO:0007669"/>
    <property type="project" value="UniProtKB-SubCell"/>
</dbReference>
<dbReference type="GO" id="GO:0003677">
    <property type="term" value="F:DNA binding"/>
    <property type="evidence" value="ECO:0007669"/>
    <property type="project" value="UniProtKB-KW"/>
</dbReference>
<dbReference type="GO" id="GO:0030261">
    <property type="term" value="P:chromosome condensation"/>
    <property type="evidence" value="ECO:0007669"/>
    <property type="project" value="UniProtKB-KW"/>
</dbReference>
<dbReference type="GO" id="GO:0035092">
    <property type="term" value="P:sperm DNA condensation"/>
    <property type="evidence" value="ECO:0007669"/>
    <property type="project" value="InterPro"/>
</dbReference>
<dbReference type="InterPro" id="IPR000221">
    <property type="entry name" value="Protamine_P1"/>
</dbReference>
<dbReference type="Pfam" id="PF00260">
    <property type="entry name" value="Protamine_P1"/>
    <property type="match status" value="1"/>
</dbReference>
<protein>
    <recommendedName>
        <fullName>Sperm protamine P1</fullName>
    </recommendedName>
</protein>
<evidence type="ECO:0000250" key="1"/>
<evidence type="ECO:0000305" key="2"/>
<organism>
    <name type="scientific">Glauconycteris beatrix</name>
    <name type="common">Beatrix's bat</name>
    <name type="synonym">Chalinolobus beatrix</name>
    <dbReference type="NCBI Taxonomy" id="177182"/>
    <lineage>
        <taxon>Eukaryota</taxon>
        <taxon>Metazoa</taxon>
        <taxon>Chordata</taxon>
        <taxon>Craniata</taxon>
        <taxon>Vertebrata</taxon>
        <taxon>Euteleostomi</taxon>
        <taxon>Mammalia</taxon>
        <taxon>Eutheria</taxon>
        <taxon>Laurasiatheria</taxon>
        <taxon>Chiroptera</taxon>
        <taxon>Yangochiroptera</taxon>
        <taxon>Vespertilionidae</taxon>
        <taxon>Glauconycteris</taxon>
    </lineage>
</organism>
<reference key="1">
    <citation type="journal article" date="2002" name="Mol. Phylogenet. Evol.">
        <title>Characterization and phylogenetic utility of the mammalian protamine P1 gene.</title>
        <authorList>
            <person name="Van Den Bussche R.A."/>
            <person name="Hoofer S.R."/>
            <person name="Hansen E.W."/>
        </authorList>
    </citation>
    <scope>NUCLEOTIDE SEQUENCE [GENOMIC DNA]</scope>
</reference>
<gene>
    <name type="primary">PRM1</name>
</gene>